<protein>
    <recommendedName>
        <fullName evidence="1">Ribosomal RNA large subunit methyltransferase Cfr</fullName>
        <ecNumber evidence="1">2.1.1.224</ecNumber>
    </recommendedName>
    <alternativeName>
        <fullName evidence="1">23S rRNA (adenine(2503)-C(8))-methyltransferase</fullName>
    </alternativeName>
    <alternativeName>
        <fullName evidence="1">23S rRNA m8A2503 methyltransferase</fullName>
    </alternativeName>
</protein>
<name>CFR_CLOBH</name>
<keyword id="KW-0004">4Fe-4S</keyword>
<keyword id="KW-0046">Antibiotic resistance</keyword>
<keyword id="KW-0963">Cytoplasm</keyword>
<keyword id="KW-1015">Disulfide bond</keyword>
<keyword id="KW-0408">Iron</keyword>
<keyword id="KW-0411">Iron-sulfur</keyword>
<keyword id="KW-0479">Metal-binding</keyword>
<keyword id="KW-0489">Methyltransferase</keyword>
<keyword id="KW-1185">Reference proteome</keyword>
<keyword id="KW-0698">rRNA processing</keyword>
<keyword id="KW-0949">S-adenosyl-L-methionine</keyword>
<keyword id="KW-0808">Transferase</keyword>
<organism>
    <name type="scientific">Clostridium botulinum (strain Hall / ATCC 3502 / NCTC 13319 / Type A)</name>
    <dbReference type="NCBI Taxonomy" id="441771"/>
    <lineage>
        <taxon>Bacteria</taxon>
        <taxon>Bacillati</taxon>
        <taxon>Bacillota</taxon>
        <taxon>Clostridia</taxon>
        <taxon>Eubacteriales</taxon>
        <taxon>Clostridiaceae</taxon>
        <taxon>Clostridium</taxon>
    </lineage>
</organism>
<sequence>MKQTKTKYGKMKQIASNLKLPDYRYEQLTKAIFHQRIDNFHDMHILPKALRIALVNEFGKNVSSVTPIFSQDSKQAQKLLFELTDGERIEAVGLKYKQGWESFCISSQCGCSFGCRFCATGSAGFKRNLTADEITDQLLYFYFNDHRLNSISFMGMGEAFANPELFDAVKILTDQNLFGLSQRRITISTIGIIPGIQRLTKEFPQVNLAFSLHSPFESQRSDLMPINKRFPLNEVMKTLDEHIIHTGRRVFIAYIMLEGINDSKEHAEAIIGLLRNRGSWEHLYHIDLIPYNSTDKTTFKFQSSSAIKQFCSTLKKASISATVRTQFGSEISAACGQLCYENEL</sequence>
<accession>A5I5U3</accession>
<accession>A7G704</accession>
<gene>
    <name evidence="1" type="primary">cfr</name>
    <name type="ordered locus">CBO2857</name>
    <name type="ordered locus">CLC_2734</name>
</gene>
<feature type="chain" id="PRO_0000350117" description="Ribosomal RNA large subunit methyltransferase Cfr">
    <location>
        <begin position="1"/>
        <end position="344"/>
    </location>
</feature>
<feature type="domain" description="Radical SAM core" evidence="2">
    <location>
        <begin position="97"/>
        <end position="330"/>
    </location>
</feature>
<feature type="active site" description="Proton acceptor" evidence="1">
    <location>
        <position position="90"/>
    </location>
</feature>
<feature type="active site" description="S-methylcysteine intermediate" evidence="1">
    <location>
        <position position="335"/>
    </location>
</feature>
<feature type="binding site" evidence="1">
    <location>
        <position position="111"/>
    </location>
    <ligand>
        <name>[4Fe-4S] cluster</name>
        <dbReference type="ChEBI" id="CHEBI:49883"/>
        <note>4Fe-4S-S-AdoMet</note>
    </ligand>
</feature>
<feature type="binding site" evidence="1">
    <location>
        <position position="115"/>
    </location>
    <ligand>
        <name>[4Fe-4S] cluster</name>
        <dbReference type="ChEBI" id="CHEBI:49883"/>
        <note>4Fe-4S-S-AdoMet</note>
    </ligand>
</feature>
<feature type="binding site" evidence="1">
    <location>
        <position position="118"/>
    </location>
    <ligand>
        <name>[4Fe-4S] cluster</name>
        <dbReference type="ChEBI" id="CHEBI:49883"/>
        <note>4Fe-4S-S-AdoMet</note>
    </ligand>
</feature>
<feature type="binding site" evidence="1">
    <location>
        <begin position="157"/>
        <end position="158"/>
    </location>
    <ligand>
        <name>S-adenosyl-L-methionine</name>
        <dbReference type="ChEBI" id="CHEBI:59789"/>
    </ligand>
</feature>
<feature type="binding site" evidence="1">
    <location>
        <position position="188"/>
    </location>
    <ligand>
        <name>S-adenosyl-L-methionine</name>
        <dbReference type="ChEBI" id="CHEBI:59789"/>
    </ligand>
</feature>
<feature type="binding site" evidence="1">
    <location>
        <begin position="211"/>
        <end position="213"/>
    </location>
    <ligand>
        <name>S-adenosyl-L-methionine</name>
        <dbReference type="ChEBI" id="CHEBI:59789"/>
    </ligand>
</feature>
<feature type="binding site" evidence="1">
    <location>
        <position position="292"/>
    </location>
    <ligand>
        <name>S-adenosyl-L-methionine</name>
        <dbReference type="ChEBI" id="CHEBI:59789"/>
    </ligand>
</feature>
<feature type="disulfide bond" description="(transient)" evidence="1">
    <location>
        <begin position="104"/>
        <end position="335"/>
    </location>
</feature>
<evidence type="ECO:0000255" key="1">
    <source>
        <dbReference type="HAMAP-Rule" id="MF_01873"/>
    </source>
</evidence>
<evidence type="ECO:0000255" key="2">
    <source>
        <dbReference type="PROSITE-ProRule" id="PRU01266"/>
    </source>
</evidence>
<reference key="1">
    <citation type="journal article" date="2007" name="Genome Res.">
        <title>Genome sequence of a proteolytic (Group I) Clostridium botulinum strain Hall A and comparative analysis of the clostridial genomes.</title>
        <authorList>
            <person name="Sebaihia M."/>
            <person name="Peck M.W."/>
            <person name="Minton N.P."/>
            <person name="Thomson N.R."/>
            <person name="Holden M.T.G."/>
            <person name="Mitchell W.J."/>
            <person name="Carter A.T."/>
            <person name="Bentley S.D."/>
            <person name="Mason D.R."/>
            <person name="Crossman L."/>
            <person name="Paul C.J."/>
            <person name="Ivens A."/>
            <person name="Wells-Bennik M.H.J."/>
            <person name="Davis I.J."/>
            <person name="Cerdeno-Tarraga A.M."/>
            <person name="Churcher C."/>
            <person name="Quail M.A."/>
            <person name="Chillingworth T."/>
            <person name="Feltwell T."/>
            <person name="Fraser A."/>
            <person name="Goodhead I."/>
            <person name="Hance Z."/>
            <person name="Jagels K."/>
            <person name="Larke N."/>
            <person name="Maddison M."/>
            <person name="Moule S."/>
            <person name="Mungall K."/>
            <person name="Norbertczak H."/>
            <person name="Rabbinowitsch E."/>
            <person name="Sanders M."/>
            <person name="Simmonds M."/>
            <person name="White B."/>
            <person name="Whithead S."/>
            <person name="Parkhill J."/>
        </authorList>
    </citation>
    <scope>NUCLEOTIDE SEQUENCE [LARGE SCALE GENOMIC DNA]</scope>
    <source>
        <strain>Hall / ATCC 3502 / NCTC 13319 / Type A</strain>
    </source>
</reference>
<reference key="2">
    <citation type="journal article" date="2007" name="PLoS ONE">
        <title>Analysis of the neurotoxin complex genes in Clostridium botulinum A1-A4 and B1 strains: BoNT/A3, /Ba4 and /B1 clusters are located within plasmids.</title>
        <authorList>
            <person name="Smith T.J."/>
            <person name="Hill K.K."/>
            <person name="Foley B.T."/>
            <person name="Detter J.C."/>
            <person name="Munk A.C."/>
            <person name="Bruce D.C."/>
            <person name="Doggett N.A."/>
            <person name="Smith L.A."/>
            <person name="Marks J.D."/>
            <person name="Xie G."/>
            <person name="Brettin T.S."/>
        </authorList>
    </citation>
    <scope>NUCLEOTIDE SEQUENCE [LARGE SCALE GENOMIC DNA]</scope>
    <source>
        <strain>Hall / ATCC 3502 / NCTC 13319 / Type A</strain>
    </source>
</reference>
<comment type="function">
    <text evidence="1">Specifically methylates position 8 of adenine 2503 in 23S rRNA. Confers resistance to some classes of antibiotics.</text>
</comment>
<comment type="catalytic activity">
    <reaction evidence="1">
        <text>adenosine(2503) in 23S rRNA + 2 reduced [2Fe-2S]-[ferredoxin] + 2 S-adenosyl-L-methionine = 8-methyladenosine(2503) in 23S rRNA + 5'-deoxyadenosine + L-methionine + 2 oxidized [2Fe-2S]-[ferredoxin] + S-adenosyl-L-homocysteine</text>
        <dbReference type="Rhea" id="RHEA:42632"/>
        <dbReference type="Rhea" id="RHEA-COMP:10000"/>
        <dbReference type="Rhea" id="RHEA-COMP:10001"/>
        <dbReference type="Rhea" id="RHEA-COMP:10152"/>
        <dbReference type="Rhea" id="RHEA-COMP:10153"/>
        <dbReference type="ChEBI" id="CHEBI:17319"/>
        <dbReference type="ChEBI" id="CHEBI:33737"/>
        <dbReference type="ChEBI" id="CHEBI:33738"/>
        <dbReference type="ChEBI" id="CHEBI:57844"/>
        <dbReference type="ChEBI" id="CHEBI:57856"/>
        <dbReference type="ChEBI" id="CHEBI:59789"/>
        <dbReference type="ChEBI" id="CHEBI:74411"/>
        <dbReference type="ChEBI" id="CHEBI:74543"/>
        <dbReference type="EC" id="2.1.1.224"/>
    </reaction>
</comment>
<comment type="cofactor">
    <cofactor evidence="1">
        <name>[4Fe-4S] cluster</name>
        <dbReference type="ChEBI" id="CHEBI:49883"/>
    </cofactor>
    <text evidence="1">Binds 1 [4Fe-4S] cluster. The cluster is coordinated with 3 cysteines and an exchangeable S-adenosyl-L-methionine.</text>
</comment>
<comment type="subcellular location">
    <subcellularLocation>
        <location evidence="1">Cytoplasm</location>
    </subcellularLocation>
</comment>
<comment type="miscellaneous">
    <text evidence="1">Reaction proceeds by a ping-pong mechanism involving intermediate methylation of a conserved cysteine residue.</text>
</comment>
<comment type="similarity">
    <text evidence="1">Belongs to the radical SAM superfamily. RlmN family. Cfr subfamily.</text>
</comment>
<proteinExistence type="inferred from homology"/>
<dbReference type="EC" id="2.1.1.224" evidence="1"/>
<dbReference type="EMBL" id="CP000727">
    <property type="protein sequence ID" value="ABS37379.1"/>
    <property type="molecule type" value="Genomic_DNA"/>
</dbReference>
<dbReference type="EMBL" id="AM412317">
    <property type="protein sequence ID" value="CAL84423.1"/>
    <property type="molecule type" value="Genomic_DNA"/>
</dbReference>
<dbReference type="RefSeq" id="WP_011987126.1">
    <property type="nucleotide sequence ID" value="NC_009698.1"/>
</dbReference>
<dbReference type="RefSeq" id="YP_001255356.1">
    <property type="nucleotide sequence ID" value="NC_009495.1"/>
</dbReference>
<dbReference type="RefSeq" id="YP_001388569.1">
    <property type="nucleotide sequence ID" value="NC_009698.1"/>
</dbReference>
<dbReference type="SMR" id="A5I5U3"/>
<dbReference type="CARD" id="ARO:3004146">
    <property type="molecule name" value="cfrC"/>
    <property type="mechanism identifier" value="ARO:0001001"/>
    <property type="mechanism name" value="antibiotic target alteration"/>
</dbReference>
<dbReference type="GeneID" id="5184333"/>
<dbReference type="KEGG" id="cbh:CLC_2734"/>
<dbReference type="KEGG" id="cbo:CBO2857"/>
<dbReference type="PATRIC" id="fig|413999.7.peg.2841"/>
<dbReference type="HOGENOM" id="CLU_029101_0_2_9"/>
<dbReference type="PRO" id="PR:A5I5U3"/>
<dbReference type="Proteomes" id="UP000001986">
    <property type="component" value="Chromosome"/>
</dbReference>
<dbReference type="GO" id="GO:0005737">
    <property type="term" value="C:cytoplasm"/>
    <property type="evidence" value="ECO:0007669"/>
    <property type="project" value="UniProtKB-SubCell"/>
</dbReference>
<dbReference type="GO" id="GO:0051539">
    <property type="term" value="F:4 iron, 4 sulfur cluster binding"/>
    <property type="evidence" value="ECO:0007669"/>
    <property type="project" value="UniProtKB-UniRule"/>
</dbReference>
<dbReference type="GO" id="GO:0046872">
    <property type="term" value="F:metal ion binding"/>
    <property type="evidence" value="ECO:0007669"/>
    <property type="project" value="UniProtKB-KW"/>
</dbReference>
<dbReference type="GO" id="GO:0016433">
    <property type="term" value="F:rRNA (adenine) methyltransferase activity"/>
    <property type="evidence" value="ECO:0007669"/>
    <property type="project" value="UniProtKB-UniRule"/>
</dbReference>
<dbReference type="GO" id="GO:0019843">
    <property type="term" value="F:rRNA binding"/>
    <property type="evidence" value="ECO:0007669"/>
    <property type="project" value="UniProtKB-UniRule"/>
</dbReference>
<dbReference type="GO" id="GO:0046677">
    <property type="term" value="P:response to antibiotic"/>
    <property type="evidence" value="ECO:0007669"/>
    <property type="project" value="UniProtKB-KW"/>
</dbReference>
<dbReference type="GO" id="GO:0070475">
    <property type="term" value="P:rRNA base methylation"/>
    <property type="evidence" value="ECO:0000318"/>
    <property type="project" value="GO_Central"/>
</dbReference>
<dbReference type="GO" id="GO:0030488">
    <property type="term" value="P:tRNA methylation"/>
    <property type="evidence" value="ECO:0000318"/>
    <property type="project" value="GO_Central"/>
</dbReference>
<dbReference type="CDD" id="cd01335">
    <property type="entry name" value="Radical_SAM"/>
    <property type="match status" value="1"/>
</dbReference>
<dbReference type="FunFam" id="3.20.20.70:FF:000014">
    <property type="entry name" value="Probable dual-specificity RNA methyltransferase RlmN"/>
    <property type="match status" value="1"/>
</dbReference>
<dbReference type="Gene3D" id="1.10.150.530">
    <property type="match status" value="1"/>
</dbReference>
<dbReference type="Gene3D" id="3.20.20.70">
    <property type="entry name" value="Aldolase class I"/>
    <property type="match status" value="1"/>
</dbReference>
<dbReference type="HAMAP" id="MF_01873">
    <property type="entry name" value="23SrRNA_methyltr_Cfr"/>
    <property type="match status" value="1"/>
</dbReference>
<dbReference type="InterPro" id="IPR013785">
    <property type="entry name" value="Aldolase_TIM"/>
</dbReference>
<dbReference type="InterPro" id="IPR040072">
    <property type="entry name" value="Methyltransferase_A"/>
</dbReference>
<dbReference type="InterPro" id="IPR022881">
    <property type="entry name" value="rRNA_lsu_MeTfrase_Cfr"/>
</dbReference>
<dbReference type="InterPro" id="IPR004383">
    <property type="entry name" value="rRNA_lsu_MTrfase_RlmN/Cfr"/>
</dbReference>
<dbReference type="InterPro" id="IPR007197">
    <property type="entry name" value="rSAM"/>
</dbReference>
<dbReference type="NCBIfam" id="NF000424">
    <property type="entry name" value="CfrAB"/>
    <property type="match status" value="1"/>
</dbReference>
<dbReference type="NCBIfam" id="NF011024">
    <property type="entry name" value="PRK14453.1"/>
    <property type="match status" value="1"/>
</dbReference>
<dbReference type="NCBIfam" id="TIGR04432">
    <property type="entry name" value="rSAM_Cfr"/>
    <property type="match status" value="1"/>
</dbReference>
<dbReference type="PANTHER" id="PTHR30544">
    <property type="entry name" value="23S RRNA METHYLTRANSFERASE"/>
    <property type="match status" value="1"/>
</dbReference>
<dbReference type="PANTHER" id="PTHR30544:SF5">
    <property type="entry name" value="RADICAL SAM CORE DOMAIN-CONTAINING PROTEIN"/>
    <property type="match status" value="1"/>
</dbReference>
<dbReference type="Pfam" id="PF04055">
    <property type="entry name" value="Radical_SAM"/>
    <property type="match status" value="1"/>
</dbReference>
<dbReference type="PIRSF" id="PIRSF006004">
    <property type="entry name" value="CHP00048"/>
    <property type="match status" value="1"/>
</dbReference>
<dbReference type="SFLD" id="SFLDF00275">
    <property type="entry name" value="adenosine_C2_methyltransferase"/>
    <property type="match status" value="1"/>
</dbReference>
<dbReference type="SFLD" id="SFLDF00296">
    <property type="entry name" value="adenosine_C8_methyltransferase"/>
    <property type="match status" value="1"/>
</dbReference>
<dbReference type="SFLD" id="SFLDS00029">
    <property type="entry name" value="Radical_SAM"/>
    <property type="match status" value="1"/>
</dbReference>
<dbReference type="SUPFAM" id="SSF102114">
    <property type="entry name" value="Radical SAM enzymes"/>
    <property type="match status" value="1"/>
</dbReference>
<dbReference type="PROSITE" id="PS51918">
    <property type="entry name" value="RADICAL_SAM"/>
    <property type="match status" value="1"/>
</dbReference>